<protein>
    <recommendedName>
        <fullName evidence="1">Urease accessory protein UreD</fullName>
    </recommendedName>
</protein>
<comment type="function">
    <text evidence="1">Required for maturation of urease via the functional incorporation of the urease nickel metallocenter.</text>
</comment>
<comment type="subunit">
    <text evidence="1">UreD, UreF and UreG form a complex that acts as a GTP-hydrolysis-dependent molecular chaperone, activating the urease apoprotein by helping to assemble the nickel containing metallocenter of UreC. The UreE protein probably delivers the nickel.</text>
</comment>
<comment type="subcellular location">
    <subcellularLocation>
        <location evidence="1">Cytoplasm</location>
    </subcellularLocation>
</comment>
<comment type="similarity">
    <text evidence="1">Belongs to the UreD family.</text>
</comment>
<accession>Q9FAS8</accession>
<evidence type="ECO:0000255" key="1">
    <source>
        <dbReference type="HAMAP-Rule" id="MF_01384"/>
    </source>
</evidence>
<name>URED_VIBPH</name>
<sequence length="280" mass="31479">MFDMSSSSSGWVAEIYLRYQLKRGITRLIERKQVGPLMVQRPFYPEHGSSHTYLLHPPGGVVAGDLLSINVVVEEGAHSLITTPGATKFYRSIGEVARQAQNLRVEEDAFLEWLPLENIFFPSAAAILETNISLKVSSRFIGWDMLCFGRPMLNETFESGNVIGQTKIFVDDKLILADSLCVDSTKFKAAGMREFPMLGAMYIYPASEALKELVHRSIQDYLMQTKESLEIGLTDVDGLLTVRALGHQTEEIMGCLVLIWKTCRKLWLGYVPDIPRIWAT</sequence>
<dbReference type="EMBL" id="AB455531">
    <property type="protein sequence ID" value="BAB13785.1"/>
    <property type="molecule type" value="Genomic_DNA"/>
</dbReference>
<dbReference type="SMR" id="Q9FAS8"/>
<dbReference type="GO" id="GO:0005737">
    <property type="term" value="C:cytoplasm"/>
    <property type="evidence" value="ECO:0007669"/>
    <property type="project" value="UniProtKB-SubCell"/>
</dbReference>
<dbReference type="GO" id="GO:0016151">
    <property type="term" value="F:nickel cation binding"/>
    <property type="evidence" value="ECO:0007669"/>
    <property type="project" value="UniProtKB-UniRule"/>
</dbReference>
<dbReference type="HAMAP" id="MF_01384">
    <property type="entry name" value="UreD"/>
    <property type="match status" value="1"/>
</dbReference>
<dbReference type="InterPro" id="IPR002669">
    <property type="entry name" value="UreD"/>
</dbReference>
<dbReference type="PANTHER" id="PTHR33643">
    <property type="entry name" value="UREASE ACCESSORY PROTEIN D"/>
    <property type="match status" value="1"/>
</dbReference>
<dbReference type="PANTHER" id="PTHR33643:SF1">
    <property type="entry name" value="UREASE ACCESSORY PROTEIN D"/>
    <property type="match status" value="1"/>
</dbReference>
<dbReference type="Pfam" id="PF01774">
    <property type="entry name" value="UreD"/>
    <property type="match status" value="1"/>
</dbReference>
<organism>
    <name type="scientific">Vibrio parahaemolyticus</name>
    <dbReference type="NCBI Taxonomy" id="670"/>
    <lineage>
        <taxon>Bacteria</taxon>
        <taxon>Pseudomonadati</taxon>
        <taxon>Pseudomonadota</taxon>
        <taxon>Gammaproteobacteria</taxon>
        <taxon>Vibrionales</taxon>
        <taxon>Vibrionaceae</taxon>
        <taxon>Vibrio</taxon>
    </lineage>
</organism>
<proteinExistence type="inferred from homology"/>
<feature type="chain" id="PRO_0000340532" description="Urease accessory protein UreD">
    <location>
        <begin position="1"/>
        <end position="280"/>
    </location>
</feature>
<reference key="1">
    <citation type="journal article" date="2000" name="Infect. Immun.">
        <title>Genetic characterization of DNA region containing the trh and ure genes of Vibrio parahaemolyticus.</title>
        <authorList>
            <person name="Park K.-S."/>
            <person name="Iida T."/>
            <person name="Yamaichi Y."/>
            <person name="Oyagi T."/>
            <person name="Yamamoto K."/>
            <person name="Honda T."/>
        </authorList>
    </citation>
    <scope>NUCLEOTIDE SEQUENCE [GENOMIC DNA]</scope>
    <source>
        <strain>TH3996</strain>
    </source>
</reference>
<reference key="2">
    <citation type="journal article" date="2009" name="Infect. Immun.">
        <title>Identification and characterization of a novel type III secretion system in trh-positive Vibrio parahaemolyticus strain TH3996 reveal genetic lineage and diversity of pathogenic machinery beyond the species level.</title>
        <authorList>
            <person name="Okada N."/>
            <person name="Iida T."/>
            <person name="Park K.-S."/>
            <person name="Goto N."/>
            <person name="Yasunaga T."/>
            <person name="Hiyoshi H."/>
            <person name="Matsuda S."/>
            <person name="Kodama T."/>
            <person name="Honda T."/>
        </authorList>
    </citation>
    <scope>NUCLEOTIDE SEQUENCE [GENOMIC DNA]</scope>
    <source>
        <strain>TH3996</strain>
    </source>
</reference>
<keyword id="KW-0143">Chaperone</keyword>
<keyword id="KW-0963">Cytoplasm</keyword>
<keyword id="KW-0996">Nickel insertion</keyword>
<gene>
    <name evidence="1" type="primary">ureD</name>
</gene>